<accession>Q57896</accession>
<proteinExistence type="inferred from homology"/>
<sequence>MTKDLRPIIWDDDKKELILIDQRKLPNKLEYFICKTYEDVAYAIKDMVVRGAPAIGVSAAYGLALAEINGDDIYKAYEVLKNTRPTAVNLFWALDRCLTAYKEGKSILDEAKKIHEEDIETCKKIGMIGEKLIEDGDTILTHCNAGALATSAYGTALSVIRFAFYNGKKIRVIADETRPRLQGAKLTAFELNYEGIPVKVITDNTAGFLMQKGEIDKIIVGADRILADGTVYNKIGTYSLAVLAKYHRIPFYVAAPLSTFDLRSSEEDVIIEERDEKEVAYIDGVRIVPEGVGCYNYAFDKTPPDLITAIITEKGIVKPNRDEILKLFR</sequence>
<evidence type="ECO:0000255" key="1">
    <source>
        <dbReference type="HAMAP-Rule" id="MF_01678"/>
    </source>
</evidence>
<evidence type="ECO:0000305" key="2"/>
<gene>
    <name type="ordered locus">MJ0454</name>
</gene>
<comment type="function">
    <text evidence="1">Catalyzes the interconversion of methylthioribose-1-phosphate (MTR-1-P) into methylthioribulose-1-phosphate (MTRu-1-P).</text>
</comment>
<comment type="catalytic activity">
    <reaction evidence="1">
        <text>5-(methylsulfanyl)-alpha-D-ribose 1-phosphate = 5-(methylsulfanyl)-D-ribulose 1-phosphate</text>
        <dbReference type="Rhea" id="RHEA:19989"/>
        <dbReference type="ChEBI" id="CHEBI:58533"/>
        <dbReference type="ChEBI" id="CHEBI:58548"/>
        <dbReference type="EC" id="5.3.1.23"/>
    </reaction>
</comment>
<comment type="similarity">
    <text evidence="2">Belongs to the eIF-2B alpha/beta/delta subunits family. MtnA subfamily.</text>
</comment>
<feature type="chain" id="PRO_0000156086" description="Putative methylthioribose-1-phosphate isomerase">
    <location>
        <begin position="1"/>
        <end position="329"/>
    </location>
</feature>
<feature type="active site" description="Proton donor" evidence="1">
    <location>
        <position position="223"/>
    </location>
</feature>
<feature type="binding site" evidence="1">
    <location>
        <begin position="50"/>
        <end position="52"/>
    </location>
    <ligand>
        <name>substrate</name>
    </ligand>
</feature>
<feature type="binding site" evidence="1">
    <location>
        <position position="84"/>
    </location>
    <ligand>
        <name>substrate</name>
    </ligand>
</feature>
<feature type="binding site" evidence="1">
    <location>
        <position position="182"/>
    </location>
    <ligand>
        <name>substrate</name>
    </ligand>
</feature>
<feature type="binding site" evidence="1">
    <location>
        <begin position="233"/>
        <end position="234"/>
    </location>
    <ligand>
        <name>substrate</name>
    </ligand>
</feature>
<feature type="site" description="Transition state stabilizer" evidence="1">
    <location>
        <position position="143"/>
    </location>
</feature>
<reference key="1">
    <citation type="journal article" date="1996" name="Science">
        <title>Complete genome sequence of the methanogenic archaeon, Methanococcus jannaschii.</title>
        <authorList>
            <person name="Bult C.J."/>
            <person name="White O."/>
            <person name="Olsen G.J."/>
            <person name="Zhou L."/>
            <person name="Fleischmann R.D."/>
            <person name="Sutton G.G."/>
            <person name="Blake J.A."/>
            <person name="FitzGerald L.M."/>
            <person name="Clayton R.A."/>
            <person name="Gocayne J.D."/>
            <person name="Kerlavage A.R."/>
            <person name="Dougherty B.A."/>
            <person name="Tomb J.-F."/>
            <person name="Adams M.D."/>
            <person name="Reich C.I."/>
            <person name="Overbeek R."/>
            <person name="Kirkness E.F."/>
            <person name="Weinstock K.G."/>
            <person name="Merrick J.M."/>
            <person name="Glodek A."/>
            <person name="Scott J.L."/>
            <person name="Geoghagen N.S.M."/>
            <person name="Weidman J.F."/>
            <person name="Fuhrmann J.L."/>
            <person name="Nguyen D."/>
            <person name="Utterback T.R."/>
            <person name="Kelley J.M."/>
            <person name="Peterson J.D."/>
            <person name="Sadow P.W."/>
            <person name="Hanna M.C."/>
            <person name="Cotton M.D."/>
            <person name="Roberts K.M."/>
            <person name="Hurst M.A."/>
            <person name="Kaine B.P."/>
            <person name="Borodovsky M."/>
            <person name="Klenk H.-P."/>
            <person name="Fraser C.M."/>
            <person name="Smith H.O."/>
            <person name="Woese C.R."/>
            <person name="Venter J.C."/>
        </authorList>
    </citation>
    <scope>NUCLEOTIDE SEQUENCE [LARGE SCALE GENOMIC DNA]</scope>
    <source>
        <strain>ATCC 43067 / DSM 2661 / JAL-1 / JCM 10045 / NBRC 100440</strain>
    </source>
</reference>
<dbReference type="EC" id="5.3.1.23" evidence="1"/>
<dbReference type="EMBL" id="L77117">
    <property type="protein sequence ID" value="AAB98443.1"/>
    <property type="molecule type" value="Genomic_DNA"/>
</dbReference>
<dbReference type="PIR" id="F64356">
    <property type="entry name" value="F64356"/>
</dbReference>
<dbReference type="RefSeq" id="WP_010869953.1">
    <property type="nucleotide sequence ID" value="NC_000909.1"/>
</dbReference>
<dbReference type="SMR" id="Q57896"/>
<dbReference type="FunCoup" id="Q57896">
    <property type="interactions" value="207"/>
</dbReference>
<dbReference type="STRING" id="243232.MJ_0454"/>
<dbReference type="PaxDb" id="243232-MJ_0454"/>
<dbReference type="EnsemblBacteria" id="AAB98443">
    <property type="protein sequence ID" value="AAB98443"/>
    <property type="gene ID" value="MJ_0454"/>
</dbReference>
<dbReference type="GeneID" id="1451315"/>
<dbReference type="KEGG" id="mja:MJ_0454"/>
<dbReference type="eggNOG" id="arCOG01123">
    <property type="taxonomic scope" value="Archaea"/>
</dbReference>
<dbReference type="HOGENOM" id="CLU_016218_1_2_2"/>
<dbReference type="InParanoid" id="Q57896"/>
<dbReference type="OrthoDB" id="45195at2157"/>
<dbReference type="PhylomeDB" id="Q57896"/>
<dbReference type="Proteomes" id="UP000000805">
    <property type="component" value="Chromosome"/>
</dbReference>
<dbReference type="GO" id="GO:0046523">
    <property type="term" value="F:S-methyl-5-thioribose-1-phosphate isomerase activity"/>
    <property type="evidence" value="ECO:0000318"/>
    <property type="project" value="GO_Central"/>
</dbReference>
<dbReference type="GO" id="GO:0019509">
    <property type="term" value="P:L-methionine salvage from methylthioadenosine"/>
    <property type="evidence" value="ECO:0000318"/>
    <property type="project" value="GO_Central"/>
</dbReference>
<dbReference type="FunFam" id="1.20.120.420:FF:000003">
    <property type="entry name" value="Methylthioribose-1-phosphate isomerase"/>
    <property type="match status" value="1"/>
</dbReference>
<dbReference type="FunFam" id="3.40.50.10470:FF:000011">
    <property type="entry name" value="Methylthioribose-1-phosphate isomerase"/>
    <property type="match status" value="1"/>
</dbReference>
<dbReference type="Gene3D" id="1.20.120.420">
    <property type="entry name" value="translation initiation factor eif-2b, domain 1"/>
    <property type="match status" value="1"/>
</dbReference>
<dbReference type="Gene3D" id="3.40.50.10470">
    <property type="entry name" value="Translation initiation factor eif-2b, domain 2"/>
    <property type="match status" value="1"/>
</dbReference>
<dbReference type="HAMAP" id="MF_01678">
    <property type="entry name" value="Salvage_MtnA"/>
    <property type="match status" value="1"/>
</dbReference>
<dbReference type="InterPro" id="IPR000649">
    <property type="entry name" value="IF-2B-related"/>
</dbReference>
<dbReference type="InterPro" id="IPR005251">
    <property type="entry name" value="IF-M1Pi"/>
</dbReference>
<dbReference type="InterPro" id="IPR042529">
    <property type="entry name" value="IF_2B-like_C"/>
</dbReference>
<dbReference type="InterPro" id="IPR011559">
    <property type="entry name" value="Initiation_fac_2B_a/b/d"/>
</dbReference>
<dbReference type="InterPro" id="IPR027363">
    <property type="entry name" value="M1Pi_N"/>
</dbReference>
<dbReference type="InterPro" id="IPR037171">
    <property type="entry name" value="NagB/RpiA_transferase-like"/>
</dbReference>
<dbReference type="NCBIfam" id="TIGR00524">
    <property type="entry name" value="eIF-2B_rel"/>
    <property type="match status" value="1"/>
</dbReference>
<dbReference type="NCBIfam" id="NF004326">
    <property type="entry name" value="PRK05720.1"/>
    <property type="match status" value="1"/>
</dbReference>
<dbReference type="NCBIfam" id="TIGR00512">
    <property type="entry name" value="salvage_mtnA"/>
    <property type="match status" value="1"/>
</dbReference>
<dbReference type="PANTHER" id="PTHR43475">
    <property type="entry name" value="METHYLTHIORIBOSE-1-PHOSPHATE ISOMERASE"/>
    <property type="match status" value="1"/>
</dbReference>
<dbReference type="PANTHER" id="PTHR43475:SF1">
    <property type="entry name" value="METHYLTHIORIBOSE-1-PHOSPHATE ISOMERASE"/>
    <property type="match status" value="1"/>
</dbReference>
<dbReference type="Pfam" id="PF01008">
    <property type="entry name" value="IF-2B"/>
    <property type="match status" value="1"/>
</dbReference>
<dbReference type="SUPFAM" id="SSF100950">
    <property type="entry name" value="NagB/RpiA/CoA transferase-like"/>
    <property type="match status" value="1"/>
</dbReference>
<organism>
    <name type="scientific">Methanocaldococcus jannaschii (strain ATCC 43067 / DSM 2661 / JAL-1 / JCM 10045 / NBRC 100440)</name>
    <name type="common">Methanococcus jannaschii</name>
    <dbReference type="NCBI Taxonomy" id="243232"/>
    <lineage>
        <taxon>Archaea</taxon>
        <taxon>Methanobacteriati</taxon>
        <taxon>Methanobacteriota</taxon>
        <taxon>Methanomada group</taxon>
        <taxon>Methanococci</taxon>
        <taxon>Methanococcales</taxon>
        <taxon>Methanocaldococcaceae</taxon>
        <taxon>Methanocaldococcus</taxon>
    </lineage>
</organism>
<name>MTNA_METJA</name>
<protein>
    <recommendedName>
        <fullName evidence="1">Putative methylthioribose-1-phosphate isomerase</fullName>
        <shortName evidence="1">M1Pi</shortName>
        <shortName evidence="1">MTR-1-P isomerase</shortName>
        <ecNumber evidence="1">5.3.1.23</ecNumber>
    </recommendedName>
    <alternativeName>
        <fullName evidence="1">MTNA-like protein</fullName>
        <shortName evidence="1">aMTNA</shortName>
    </alternativeName>
    <alternativeName>
        <fullName evidence="1">S-methyl-5-thioribose-1-phosphate isomerase</fullName>
    </alternativeName>
</protein>
<keyword id="KW-0028">Amino-acid biosynthesis</keyword>
<keyword id="KW-0413">Isomerase</keyword>
<keyword id="KW-0486">Methionine biosynthesis</keyword>
<keyword id="KW-1185">Reference proteome</keyword>